<evidence type="ECO:0000255" key="1">
    <source>
        <dbReference type="HAMAP-Rule" id="MF_01025"/>
    </source>
</evidence>
<sequence length="522" mass="56994">MSNRVIIFDTTLRDGEQALAASLSVKEKLQIAMALERLGVDVMEVGFPVSSPGDFESVQTIARTIKNSRVCALSRALEKDIDAAAQALSVAEQFRIHTFISTSTIHVESKLKRSFEQVLEMAVGAVKYARRFTDDVEFSCEDAGRTPIDNLCRMVEAAIHAGARTINIPDTVGYTVPSEFGGIIQTLFNRVPNIDQAIISVHCHDDLGMSVANSITAVQHGARQIECTMNGIGERAGNCSLEEIAMILATRKNLLGVETGINAKEIHRTSNLVSQLCNMPIQSNKAIVGANAFTHSSGIHQDGMLKAQNTYEIMTPESIGLNRNNLNMTSRSGRHVIKHRMEEMGYSEQDYNLDALYEQFLHLADKKGQVFDYDLEALAFMEAQAAEDNFYQLQQLVVQSDSTEGVATATVRIDVGGEIKTEAATGNGPVDAAYNAIARATDRRIDIISYKLGAKGEGQNALGQVDITAVYHEQNFHGVGLATDVVEASARALVHVMNLTCRADKVADYKQNMHKNRELGGV</sequence>
<name>LEU1_SHESM</name>
<organism>
    <name type="scientific">Shewanella sp. (strain MR-4)</name>
    <dbReference type="NCBI Taxonomy" id="60480"/>
    <lineage>
        <taxon>Bacteria</taxon>
        <taxon>Pseudomonadati</taxon>
        <taxon>Pseudomonadota</taxon>
        <taxon>Gammaproteobacteria</taxon>
        <taxon>Alteromonadales</taxon>
        <taxon>Shewanellaceae</taxon>
        <taxon>Shewanella</taxon>
    </lineage>
</organism>
<keyword id="KW-0028">Amino-acid biosynthesis</keyword>
<keyword id="KW-0100">Branched-chain amino acid biosynthesis</keyword>
<keyword id="KW-0963">Cytoplasm</keyword>
<keyword id="KW-0432">Leucine biosynthesis</keyword>
<keyword id="KW-0464">Manganese</keyword>
<keyword id="KW-0479">Metal-binding</keyword>
<keyword id="KW-0808">Transferase</keyword>
<protein>
    <recommendedName>
        <fullName evidence="1">2-isopropylmalate synthase</fullName>
        <ecNumber evidence="1">2.3.3.13</ecNumber>
    </recommendedName>
    <alternativeName>
        <fullName evidence="1">Alpha-IPM synthase</fullName>
    </alternativeName>
    <alternativeName>
        <fullName evidence="1">Alpha-isopropylmalate synthase</fullName>
    </alternativeName>
</protein>
<comment type="function">
    <text evidence="1">Catalyzes the condensation of the acetyl group of acetyl-CoA with 3-methyl-2-oxobutanoate (2-ketoisovalerate) to form 3-carboxy-3-hydroxy-4-methylpentanoate (2-isopropylmalate).</text>
</comment>
<comment type="catalytic activity">
    <reaction evidence="1">
        <text>3-methyl-2-oxobutanoate + acetyl-CoA + H2O = (2S)-2-isopropylmalate + CoA + H(+)</text>
        <dbReference type="Rhea" id="RHEA:21524"/>
        <dbReference type="ChEBI" id="CHEBI:1178"/>
        <dbReference type="ChEBI" id="CHEBI:11851"/>
        <dbReference type="ChEBI" id="CHEBI:15377"/>
        <dbReference type="ChEBI" id="CHEBI:15378"/>
        <dbReference type="ChEBI" id="CHEBI:57287"/>
        <dbReference type="ChEBI" id="CHEBI:57288"/>
        <dbReference type="EC" id="2.3.3.13"/>
    </reaction>
</comment>
<comment type="cofactor">
    <cofactor evidence="1">
        <name>Mn(2+)</name>
        <dbReference type="ChEBI" id="CHEBI:29035"/>
    </cofactor>
</comment>
<comment type="pathway">
    <text evidence="1">Amino-acid biosynthesis; L-leucine biosynthesis; L-leucine from 3-methyl-2-oxobutanoate: step 1/4.</text>
</comment>
<comment type="subunit">
    <text evidence="1">Homodimer.</text>
</comment>
<comment type="subcellular location">
    <subcellularLocation>
        <location evidence="1">Cytoplasm</location>
    </subcellularLocation>
</comment>
<comment type="similarity">
    <text evidence="1">Belongs to the alpha-IPM synthase/homocitrate synthase family. LeuA type 1 subfamily.</text>
</comment>
<feature type="chain" id="PRO_1000149291" description="2-isopropylmalate synthase">
    <location>
        <begin position="1"/>
        <end position="522"/>
    </location>
</feature>
<feature type="domain" description="Pyruvate carboxyltransferase" evidence="1">
    <location>
        <begin position="5"/>
        <end position="267"/>
    </location>
</feature>
<feature type="region of interest" description="Regulatory domain" evidence="1">
    <location>
        <begin position="392"/>
        <end position="522"/>
    </location>
</feature>
<feature type="binding site" evidence="1">
    <location>
        <position position="14"/>
    </location>
    <ligand>
        <name>Mn(2+)</name>
        <dbReference type="ChEBI" id="CHEBI:29035"/>
    </ligand>
</feature>
<feature type="binding site" evidence="1">
    <location>
        <position position="202"/>
    </location>
    <ligand>
        <name>Mn(2+)</name>
        <dbReference type="ChEBI" id="CHEBI:29035"/>
    </ligand>
</feature>
<feature type="binding site" evidence="1">
    <location>
        <position position="204"/>
    </location>
    <ligand>
        <name>Mn(2+)</name>
        <dbReference type="ChEBI" id="CHEBI:29035"/>
    </ligand>
</feature>
<feature type="binding site" evidence="1">
    <location>
        <position position="238"/>
    </location>
    <ligand>
        <name>Mn(2+)</name>
        <dbReference type="ChEBI" id="CHEBI:29035"/>
    </ligand>
</feature>
<gene>
    <name evidence="1" type="primary">leuA</name>
    <name type="ordered locus">Shewmr4_3588</name>
</gene>
<proteinExistence type="inferred from homology"/>
<reference key="1">
    <citation type="submission" date="2006-08" db="EMBL/GenBank/DDBJ databases">
        <title>Complete sequence of Shewanella sp. MR-4.</title>
        <authorList>
            <consortium name="US DOE Joint Genome Institute"/>
            <person name="Copeland A."/>
            <person name="Lucas S."/>
            <person name="Lapidus A."/>
            <person name="Barry K."/>
            <person name="Detter J.C."/>
            <person name="Glavina del Rio T."/>
            <person name="Hammon N."/>
            <person name="Israni S."/>
            <person name="Dalin E."/>
            <person name="Tice H."/>
            <person name="Pitluck S."/>
            <person name="Kiss H."/>
            <person name="Brettin T."/>
            <person name="Bruce D."/>
            <person name="Han C."/>
            <person name="Tapia R."/>
            <person name="Gilna P."/>
            <person name="Schmutz J."/>
            <person name="Larimer F."/>
            <person name="Land M."/>
            <person name="Hauser L."/>
            <person name="Kyrpides N."/>
            <person name="Mikhailova N."/>
            <person name="Nealson K."/>
            <person name="Konstantinidis K."/>
            <person name="Klappenbach J."/>
            <person name="Tiedje J."/>
            <person name="Richardson P."/>
        </authorList>
    </citation>
    <scope>NUCLEOTIDE SEQUENCE [LARGE SCALE GENOMIC DNA]</scope>
    <source>
        <strain>MR-4</strain>
    </source>
</reference>
<dbReference type="EC" id="2.3.3.13" evidence="1"/>
<dbReference type="EMBL" id="CP000446">
    <property type="protein sequence ID" value="ABI40652.1"/>
    <property type="molecule type" value="Genomic_DNA"/>
</dbReference>
<dbReference type="RefSeq" id="WP_011624315.1">
    <property type="nucleotide sequence ID" value="NC_008321.1"/>
</dbReference>
<dbReference type="SMR" id="Q0HE65"/>
<dbReference type="KEGG" id="she:Shewmr4_3588"/>
<dbReference type="HOGENOM" id="CLU_022158_0_1_6"/>
<dbReference type="UniPathway" id="UPA00048">
    <property type="reaction ID" value="UER00070"/>
</dbReference>
<dbReference type="GO" id="GO:0005829">
    <property type="term" value="C:cytosol"/>
    <property type="evidence" value="ECO:0007669"/>
    <property type="project" value="TreeGrafter"/>
</dbReference>
<dbReference type="GO" id="GO:0003852">
    <property type="term" value="F:2-isopropylmalate synthase activity"/>
    <property type="evidence" value="ECO:0007669"/>
    <property type="project" value="UniProtKB-UniRule"/>
</dbReference>
<dbReference type="GO" id="GO:0003985">
    <property type="term" value="F:acetyl-CoA C-acetyltransferase activity"/>
    <property type="evidence" value="ECO:0007669"/>
    <property type="project" value="UniProtKB-UniRule"/>
</dbReference>
<dbReference type="GO" id="GO:0030145">
    <property type="term" value="F:manganese ion binding"/>
    <property type="evidence" value="ECO:0007669"/>
    <property type="project" value="UniProtKB-UniRule"/>
</dbReference>
<dbReference type="GO" id="GO:0009098">
    <property type="term" value="P:L-leucine biosynthetic process"/>
    <property type="evidence" value="ECO:0007669"/>
    <property type="project" value="UniProtKB-UniRule"/>
</dbReference>
<dbReference type="CDD" id="cd07940">
    <property type="entry name" value="DRE_TIM_IPMS"/>
    <property type="match status" value="1"/>
</dbReference>
<dbReference type="FunFam" id="1.10.238.260:FF:000001">
    <property type="entry name" value="2-isopropylmalate synthase"/>
    <property type="match status" value="1"/>
</dbReference>
<dbReference type="FunFam" id="3.20.20.70:FF:000010">
    <property type="entry name" value="2-isopropylmalate synthase"/>
    <property type="match status" value="1"/>
</dbReference>
<dbReference type="FunFam" id="3.30.160.270:FF:000001">
    <property type="entry name" value="2-isopropylmalate synthase"/>
    <property type="match status" value="1"/>
</dbReference>
<dbReference type="Gene3D" id="1.10.238.260">
    <property type="match status" value="1"/>
</dbReference>
<dbReference type="Gene3D" id="3.30.160.270">
    <property type="match status" value="1"/>
</dbReference>
<dbReference type="Gene3D" id="3.20.20.70">
    <property type="entry name" value="Aldolase class I"/>
    <property type="match status" value="1"/>
</dbReference>
<dbReference type="HAMAP" id="MF_01025">
    <property type="entry name" value="LeuA_type1"/>
    <property type="match status" value="1"/>
</dbReference>
<dbReference type="InterPro" id="IPR050073">
    <property type="entry name" value="2-IPM_HCS-like"/>
</dbReference>
<dbReference type="InterPro" id="IPR013709">
    <property type="entry name" value="2-isopropylmalate_synth_dimer"/>
</dbReference>
<dbReference type="InterPro" id="IPR002034">
    <property type="entry name" value="AIPM/Hcit_synth_CS"/>
</dbReference>
<dbReference type="InterPro" id="IPR013785">
    <property type="entry name" value="Aldolase_TIM"/>
</dbReference>
<dbReference type="InterPro" id="IPR054691">
    <property type="entry name" value="LeuA/HCS_post-cat"/>
</dbReference>
<dbReference type="InterPro" id="IPR036230">
    <property type="entry name" value="LeuA_allosteric_dom_sf"/>
</dbReference>
<dbReference type="InterPro" id="IPR005671">
    <property type="entry name" value="LeuA_bact_synth"/>
</dbReference>
<dbReference type="InterPro" id="IPR000891">
    <property type="entry name" value="PYR_CT"/>
</dbReference>
<dbReference type="NCBIfam" id="TIGR00973">
    <property type="entry name" value="leuA_bact"/>
    <property type="match status" value="1"/>
</dbReference>
<dbReference type="NCBIfam" id="NF002084">
    <property type="entry name" value="PRK00915.1-1"/>
    <property type="match status" value="1"/>
</dbReference>
<dbReference type="NCBIfam" id="NF002086">
    <property type="entry name" value="PRK00915.1-3"/>
    <property type="match status" value="1"/>
</dbReference>
<dbReference type="PANTHER" id="PTHR10277:SF9">
    <property type="entry name" value="2-ISOPROPYLMALATE SYNTHASE 1, CHLOROPLASTIC-RELATED"/>
    <property type="match status" value="1"/>
</dbReference>
<dbReference type="PANTHER" id="PTHR10277">
    <property type="entry name" value="HOMOCITRATE SYNTHASE-RELATED"/>
    <property type="match status" value="1"/>
</dbReference>
<dbReference type="Pfam" id="PF22617">
    <property type="entry name" value="HCS_D2"/>
    <property type="match status" value="1"/>
</dbReference>
<dbReference type="Pfam" id="PF00682">
    <property type="entry name" value="HMGL-like"/>
    <property type="match status" value="1"/>
</dbReference>
<dbReference type="Pfam" id="PF08502">
    <property type="entry name" value="LeuA_dimer"/>
    <property type="match status" value="1"/>
</dbReference>
<dbReference type="SMART" id="SM00917">
    <property type="entry name" value="LeuA_dimer"/>
    <property type="match status" value="1"/>
</dbReference>
<dbReference type="SUPFAM" id="SSF110921">
    <property type="entry name" value="2-isopropylmalate synthase LeuA, allosteric (dimerisation) domain"/>
    <property type="match status" value="1"/>
</dbReference>
<dbReference type="SUPFAM" id="SSF51569">
    <property type="entry name" value="Aldolase"/>
    <property type="match status" value="1"/>
</dbReference>
<dbReference type="PROSITE" id="PS00815">
    <property type="entry name" value="AIPM_HOMOCIT_SYNTH_1"/>
    <property type="match status" value="1"/>
</dbReference>
<dbReference type="PROSITE" id="PS00816">
    <property type="entry name" value="AIPM_HOMOCIT_SYNTH_2"/>
    <property type="match status" value="1"/>
</dbReference>
<dbReference type="PROSITE" id="PS50991">
    <property type="entry name" value="PYR_CT"/>
    <property type="match status" value="1"/>
</dbReference>
<accession>Q0HE65</accession>